<evidence type="ECO:0000255" key="1">
    <source>
        <dbReference type="HAMAP-Rule" id="MF_00184"/>
    </source>
</evidence>
<name>SYT_HELPS</name>
<comment type="function">
    <text evidence="1">Catalyzes the attachment of threonine to tRNA(Thr) in a two-step reaction: L-threonine is first activated by ATP to form Thr-AMP and then transferred to the acceptor end of tRNA(Thr). Also edits incorrectly charged L-seryl-tRNA(Thr).</text>
</comment>
<comment type="catalytic activity">
    <reaction evidence="1">
        <text>tRNA(Thr) + L-threonine + ATP = L-threonyl-tRNA(Thr) + AMP + diphosphate + H(+)</text>
        <dbReference type="Rhea" id="RHEA:24624"/>
        <dbReference type="Rhea" id="RHEA-COMP:9670"/>
        <dbReference type="Rhea" id="RHEA-COMP:9704"/>
        <dbReference type="ChEBI" id="CHEBI:15378"/>
        <dbReference type="ChEBI" id="CHEBI:30616"/>
        <dbReference type="ChEBI" id="CHEBI:33019"/>
        <dbReference type="ChEBI" id="CHEBI:57926"/>
        <dbReference type="ChEBI" id="CHEBI:78442"/>
        <dbReference type="ChEBI" id="CHEBI:78534"/>
        <dbReference type="ChEBI" id="CHEBI:456215"/>
        <dbReference type="EC" id="6.1.1.3"/>
    </reaction>
</comment>
<comment type="cofactor">
    <cofactor evidence="1">
        <name>Zn(2+)</name>
        <dbReference type="ChEBI" id="CHEBI:29105"/>
    </cofactor>
    <text evidence="1">Binds 1 zinc ion per subunit.</text>
</comment>
<comment type="subunit">
    <text evidence="1">Homodimer.</text>
</comment>
<comment type="subcellular location">
    <subcellularLocation>
        <location evidence="1">Cytoplasm</location>
    </subcellularLocation>
</comment>
<comment type="similarity">
    <text evidence="1">Belongs to the class-II aminoacyl-tRNA synthetase family.</text>
</comment>
<protein>
    <recommendedName>
        <fullName evidence="1">Threonine--tRNA ligase</fullName>
        <ecNumber evidence="1">6.1.1.3</ecNumber>
    </recommendedName>
    <alternativeName>
        <fullName evidence="1">Threonyl-tRNA synthetase</fullName>
        <shortName evidence="1">ThrRS</shortName>
    </alternativeName>
</protein>
<sequence length="612" mass="70224">MSAELIAVYKDEQIIDLESAKVLGLSDGVKALNGTEPIYFDDSPLALEVIRHSCAHLLAQSLKALYPDAKFFVGPVVEEGFYYDFKTASKISEEDLPKIEAKMKEFAKLKLAITKEVLTREQALERFKGDELKHAVMSKISGDKFGVYQQGEFEDLCKGPHLPNTRFLNHFKLTKLAGAYLGGDENNEMLIRIYGIAFATKEGLKDYLFQIEEAKKRNHRKLGVELGLFSFDDEIGAGLPLWLPKGARLRKRIEDLLSKALLLRGYEPVKGPEILKSDVWKISGHYDNYKENMYFTTIDEQEYGIKPMNCVGHIKVYQSALHSYRDLPLRFYEYGVVHRHEKSGVLHGLLRVREFTQDDAHIFCSFEQIQSEVSAILDFTHKIMQAFDFSYEMELSTRPAKSIGDDKVWEKATNALKEALKEHRIDYKIDEGGGAFYGPKIDIKITDALKRKWQCGTIQVDMNLPERFKLAFTNEHNHAEQPVMIHRAILGSFERFIAILSEHFGGNFPFFVAPTQIALIPINEEHHVFALKLKEALKKRDIFVEVLDKNDSLNKKVRLAEKQKIPMILVLGNEEVETEILSIRDREKQAQYKMPLKEFLNMVESKMQEVSF</sequence>
<dbReference type="EC" id="6.1.1.3" evidence="1"/>
<dbReference type="EMBL" id="CP001072">
    <property type="protein sequence ID" value="ACD47583.1"/>
    <property type="molecule type" value="Genomic_DNA"/>
</dbReference>
<dbReference type="RefSeq" id="WP_001271869.1">
    <property type="nucleotide sequence ID" value="NC_010698.2"/>
</dbReference>
<dbReference type="SMR" id="B2URV1"/>
<dbReference type="KEGG" id="hps:HPSH_00615"/>
<dbReference type="HOGENOM" id="CLU_008554_0_1_7"/>
<dbReference type="GO" id="GO:0005829">
    <property type="term" value="C:cytosol"/>
    <property type="evidence" value="ECO:0007669"/>
    <property type="project" value="TreeGrafter"/>
</dbReference>
<dbReference type="GO" id="GO:0005524">
    <property type="term" value="F:ATP binding"/>
    <property type="evidence" value="ECO:0007669"/>
    <property type="project" value="UniProtKB-UniRule"/>
</dbReference>
<dbReference type="GO" id="GO:0046872">
    <property type="term" value="F:metal ion binding"/>
    <property type="evidence" value="ECO:0007669"/>
    <property type="project" value="UniProtKB-KW"/>
</dbReference>
<dbReference type="GO" id="GO:0004829">
    <property type="term" value="F:threonine-tRNA ligase activity"/>
    <property type="evidence" value="ECO:0007669"/>
    <property type="project" value="UniProtKB-UniRule"/>
</dbReference>
<dbReference type="GO" id="GO:0000049">
    <property type="term" value="F:tRNA binding"/>
    <property type="evidence" value="ECO:0007669"/>
    <property type="project" value="UniProtKB-KW"/>
</dbReference>
<dbReference type="GO" id="GO:0006435">
    <property type="term" value="P:threonyl-tRNA aminoacylation"/>
    <property type="evidence" value="ECO:0007669"/>
    <property type="project" value="UniProtKB-UniRule"/>
</dbReference>
<dbReference type="CDD" id="cd00860">
    <property type="entry name" value="ThrRS_anticodon"/>
    <property type="match status" value="1"/>
</dbReference>
<dbReference type="CDD" id="cd00771">
    <property type="entry name" value="ThrRS_core"/>
    <property type="match status" value="1"/>
</dbReference>
<dbReference type="FunFam" id="3.30.930.10:FF:000019">
    <property type="entry name" value="Threonine--tRNA ligase"/>
    <property type="match status" value="1"/>
</dbReference>
<dbReference type="FunFam" id="3.30.980.10:FF:000005">
    <property type="entry name" value="Threonyl-tRNA synthetase, mitochondrial"/>
    <property type="match status" value="1"/>
</dbReference>
<dbReference type="Gene3D" id="3.30.54.20">
    <property type="match status" value="1"/>
</dbReference>
<dbReference type="Gene3D" id="3.40.50.800">
    <property type="entry name" value="Anticodon-binding domain"/>
    <property type="match status" value="1"/>
</dbReference>
<dbReference type="Gene3D" id="3.30.930.10">
    <property type="entry name" value="Bira Bifunctional Protein, Domain 2"/>
    <property type="match status" value="1"/>
</dbReference>
<dbReference type="Gene3D" id="3.30.980.10">
    <property type="entry name" value="Threonyl-trna Synthetase, Chain A, domain 2"/>
    <property type="match status" value="1"/>
</dbReference>
<dbReference type="HAMAP" id="MF_00184">
    <property type="entry name" value="Thr_tRNA_synth"/>
    <property type="match status" value="1"/>
</dbReference>
<dbReference type="InterPro" id="IPR002314">
    <property type="entry name" value="aa-tRNA-synt_IIb"/>
</dbReference>
<dbReference type="InterPro" id="IPR006195">
    <property type="entry name" value="aa-tRNA-synth_II"/>
</dbReference>
<dbReference type="InterPro" id="IPR045864">
    <property type="entry name" value="aa-tRNA-synth_II/BPL/LPL"/>
</dbReference>
<dbReference type="InterPro" id="IPR004154">
    <property type="entry name" value="Anticodon-bd"/>
</dbReference>
<dbReference type="InterPro" id="IPR036621">
    <property type="entry name" value="Anticodon-bd_dom_sf"/>
</dbReference>
<dbReference type="InterPro" id="IPR002320">
    <property type="entry name" value="Thr-tRNA-ligase_IIa"/>
</dbReference>
<dbReference type="InterPro" id="IPR018163">
    <property type="entry name" value="Thr/Ala-tRNA-synth_IIc_edit"/>
</dbReference>
<dbReference type="InterPro" id="IPR047246">
    <property type="entry name" value="ThrRS_anticodon"/>
</dbReference>
<dbReference type="InterPro" id="IPR033728">
    <property type="entry name" value="ThrRS_core"/>
</dbReference>
<dbReference type="InterPro" id="IPR012947">
    <property type="entry name" value="tRNA_SAD"/>
</dbReference>
<dbReference type="NCBIfam" id="TIGR00418">
    <property type="entry name" value="thrS"/>
    <property type="match status" value="1"/>
</dbReference>
<dbReference type="PANTHER" id="PTHR11451:SF44">
    <property type="entry name" value="THREONINE--TRNA LIGASE, CHLOROPLASTIC_MITOCHONDRIAL 2"/>
    <property type="match status" value="1"/>
</dbReference>
<dbReference type="PANTHER" id="PTHR11451">
    <property type="entry name" value="THREONINE-TRNA LIGASE"/>
    <property type="match status" value="1"/>
</dbReference>
<dbReference type="Pfam" id="PF03129">
    <property type="entry name" value="HGTP_anticodon"/>
    <property type="match status" value="1"/>
</dbReference>
<dbReference type="Pfam" id="PF00587">
    <property type="entry name" value="tRNA-synt_2b"/>
    <property type="match status" value="1"/>
</dbReference>
<dbReference type="Pfam" id="PF07973">
    <property type="entry name" value="tRNA_SAD"/>
    <property type="match status" value="1"/>
</dbReference>
<dbReference type="PRINTS" id="PR01047">
    <property type="entry name" value="TRNASYNTHTHR"/>
</dbReference>
<dbReference type="SMART" id="SM00863">
    <property type="entry name" value="tRNA_SAD"/>
    <property type="match status" value="1"/>
</dbReference>
<dbReference type="SUPFAM" id="SSF52954">
    <property type="entry name" value="Class II aaRS ABD-related"/>
    <property type="match status" value="1"/>
</dbReference>
<dbReference type="SUPFAM" id="SSF55681">
    <property type="entry name" value="Class II aaRS and biotin synthetases"/>
    <property type="match status" value="1"/>
</dbReference>
<dbReference type="SUPFAM" id="SSF55186">
    <property type="entry name" value="ThrRS/AlaRS common domain"/>
    <property type="match status" value="1"/>
</dbReference>
<dbReference type="PROSITE" id="PS50862">
    <property type="entry name" value="AA_TRNA_LIGASE_II"/>
    <property type="match status" value="1"/>
</dbReference>
<proteinExistence type="inferred from homology"/>
<feature type="chain" id="PRO_1000098579" description="Threonine--tRNA ligase">
    <location>
        <begin position="1"/>
        <end position="612"/>
    </location>
</feature>
<feature type="region of interest" description="Catalytic" evidence="1">
    <location>
        <begin position="218"/>
        <end position="509"/>
    </location>
</feature>
<feature type="binding site" evidence="1">
    <location>
        <position position="310"/>
    </location>
    <ligand>
        <name>Zn(2+)</name>
        <dbReference type="ChEBI" id="CHEBI:29105"/>
    </ligand>
</feature>
<feature type="binding site" evidence="1">
    <location>
        <position position="361"/>
    </location>
    <ligand>
        <name>Zn(2+)</name>
        <dbReference type="ChEBI" id="CHEBI:29105"/>
    </ligand>
</feature>
<feature type="binding site" evidence="1">
    <location>
        <position position="486"/>
    </location>
    <ligand>
        <name>Zn(2+)</name>
        <dbReference type="ChEBI" id="CHEBI:29105"/>
    </ligand>
</feature>
<keyword id="KW-0030">Aminoacyl-tRNA synthetase</keyword>
<keyword id="KW-0067">ATP-binding</keyword>
<keyword id="KW-0963">Cytoplasm</keyword>
<keyword id="KW-0436">Ligase</keyword>
<keyword id="KW-0479">Metal-binding</keyword>
<keyword id="KW-0547">Nucleotide-binding</keyword>
<keyword id="KW-0648">Protein biosynthesis</keyword>
<keyword id="KW-0694">RNA-binding</keyword>
<keyword id="KW-0820">tRNA-binding</keyword>
<keyword id="KW-0862">Zinc</keyword>
<accession>B2URV1</accession>
<gene>
    <name evidence="1" type="primary">thrS</name>
    <name type="ordered locus">HPSH_00615</name>
</gene>
<reference key="1">
    <citation type="submission" date="2008-05" db="EMBL/GenBank/DDBJ databases">
        <title>Genome sequence of Helicobacter pylori from the remote Amazon: traces of Asian ancestry of the first Americans.</title>
        <authorList>
            <person name="Kersulyte D."/>
            <person name="Kalia A."/>
            <person name="Gilman R.H."/>
            <person name="Berg D.E."/>
        </authorList>
    </citation>
    <scope>NUCLEOTIDE SEQUENCE [LARGE SCALE GENOMIC DNA]</scope>
    <source>
        <strain>Shi470</strain>
    </source>
</reference>
<organism>
    <name type="scientific">Helicobacter pylori (strain Shi470)</name>
    <dbReference type="NCBI Taxonomy" id="512562"/>
    <lineage>
        <taxon>Bacteria</taxon>
        <taxon>Pseudomonadati</taxon>
        <taxon>Campylobacterota</taxon>
        <taxon>Epsilonproteobacteria</taxon>
        <taxon>Campylobacterales</taxon>
        <taxon>Helicobacteraceae</taxon>
        <taxon>Helicobacter</taxon>
    </lineage>
</organism>